<evidence type="ECO:0000250" key="1"/>
<evidence type="ECO:0000255" key="2"/>
<evidence type="ECO:0000305" key="3"/>
<name>G3ST2_MOUSE</name>
<sequence>MWGSQHRSFQVALWFLVLAVFLLVGFLHVDFRLLIPDKVQEPPVTNIMFLKTHKTASSTILNILYRFSESHNLSTALPEGSRVHLGYPWFFVTRYVEGLKQDAHLQHHFNIMCNHLRFNYPEVQKVMPRDTFYFSILRNPVFQLESSFIYYKDYAPAFQRAKSLDEFLADPWKYYNASVSLKNVYAKNNMWFDFGFDNNAPADMDYVRKRLAEVEQRFHLVLIADYFDESMVLLRRRLRWQLDDVVSFKLNVRSQSTVSHLTPESQERVQHWCALDWQLYQHFNRTFWTQLHAELSPRQLTEEVEQLRERQRELMALCLQDPEPKNLTHIDDQNLRPYQGGKANILGYNLRHGLDTTTLHICQRMAMPELQHMAHMYSLQFPDKTPKDIPFLKK</sequence>
<protein>
    <recommendedName>
        <fullName>Galactose-3-O-sulfotransferase 2</fullName>
        <shortName>Gal3ST-2</shortName>
        <ecNumber>2.8.2.-</ecNumber>
    </recommendedName>
    <alternativeName>
        <fullName>Beta-galactose-3-O-sulfotransferase 2</fullName>
    </alternativeName>
    <alternativeName>
        <fullName>Gal-beta-1, 3-GalNAc 3'-sulfotransferase 2</fullName>
    </alternativeName>
</protein>
<organism>
    <name type="scientific">Mus musculus</name>
    <name type="common">Mouse</name>
    <dbReference type="NCBI Taxonomy" id="10090"/>
    <lineage>
        <taxon>Eukaryota</taxon>
        <taxon>Metazoa</taxon>
        <taxon>Chordata</taxon>
        <taxon>Craniata</taxon>
        <taxon>Vertebrata</taxon>
        <taxon>Euteleostomi</taxon>
        <taxon>Mammalia</taxon>
        <taxon>Eutheria</taxon>
        <taxon>Euarchontoglires</taxon>
        <taxon>Glires</taxon>
        <taxon>Rodentia</taxon>
        <taxon>Myomorpha</taxon>
        <taxon>Muroidea</taxon>
        <taxon>Muridae</taxon>
        <taxon>Murinae</taxon>
        <taxon>Mus</taxon>
        <taxon>Mus</taxon>
    </lineage>
</organism>
<accession>Q6XQH0</accession>
<keyword id="KW-0325">Glycoprotein</keyword>
<keyword id="KW-0333">Golgi apparatus</keyword>
<keyword id="KW-0472">Membrane</keyword>
<keyword id="KW-1185">Reference proteome</keyword>
<keyword id="KW-0735">Signal-anchor</keyword>
<keyword id="KW-0808">Transferase</keyword>
<keyword id="KW-0812">Transmembrane</keyword>
<keyword id="KW-1133">Transmembrane helix</keyword>
<reference key="1">
    <citation type="submission" date="2003-01" db="EMBL/GenBank/DDBJ databases">
        <authorList>
            <person name="Seko A."/>
            <person name="Yamashita K."/>
        </authorList>
    </citation>
    <scope>NUCLEOTIDE SEQUENCE [MRNA]</scope>
    <source>
        <strain>CD-1</strain>
        <tissue>Colon</tissue>
    </source>
</reference>
<dbReference type="EC" id="2.8.2.-"/>
<dbReference type="EMBL" id="AY216522">
    <property type="protein sequence ID" value="AAP51032.1"/>
    <property type="molecule type" value="mRNA"/>
</dbReference>
<dbReference type="CCDS" id="CCDS56641.1"/>
<dbReference type="RefSeq" id="NP_001192178.1">
    <property type="nucleotide sequence ID" value="NM_001205249.1"/>
</dbReference>
<dbReference type="FunCoup" id="Q6XQH0">
    <property type="interactions" value="4"/>
</dbReference>
<dbReference type="STRING" id="10090.ENSMUSP00000136012"/>
<dbReference type="GlyCosmos" id="Q6XQH0">
    <property type="glycosylation" value="4 sites, No reported glycans"/>
</dbReference>
<dbReference type="GlyGen" id="Q6XQH0">
    <property type="glycosylation" value="4 sites"/>
</dbReference>
<dbReference type="PhosphoSitePlus" id="Q6XQH0"/>
<dbReference type="PaxDb" id="10090-ENSMUSP00000136012"/>
<dbReference type="ProteomicsDB" id="267549"/>
<dbReference type="Ensembl" id="ENSMUST00000178757.8">
    <property type="protein sequence ID" value="ENSMUSP00000136012.2"/>
    <property type="gene ID" value="ENSMUSG00000093805.8"/>
</dbReference>
<dbReference type="GeneID" id="100041596"/>
<dbReference type="KEGG" id="mmu:100041596"/>
<dbReference type="UCSC" id="uc029qsc.1">
    <property type="organism name" value="mouse"/>
</dbReference>
<dbReference type="AGR" id="MGI:2685834"/>
<dbReference type="CTD" id="100041596"/>
<dbReference type="MGI" id="MGI:2685834">
    <property type="gene designation" value="Gal3st2"/>
</dbReference>
<dbReference type="VEuPathDB" id="HostDB:ENSMUSG00000093805"/>
<dbReference type="eggNOG" id="ENOG502QSHR">
    <property type="taxonomic scope" value="Eukaryota"/>
</dbReference>
<dbReference type="GeneTree" id="ENSGT00950000182923"/>
<dbReference type="HOGENOM" id="CLU_040616_1_1_1"/>
<dbReference type="InParanoid" id="Q6XQH0"/>
<dbReference type="OrthoDB" id="514299at2759"/>
<dbReference type="PhylomeDB" id="Q6XQH0"/>
<dbReference type="UniPathway" id="UPA00353"/>
<dbReference type="BioGRID-ORCS" id="100041596">
    <property type="hits" value="1 hit in 66 CRISPR screens"/>
</dbReference>
<dbReference type="ChiTaRS" id="Gal3st2b">
    <property type="organism name" value="mouse"/>
</dbReference>
<dbReference type="PRO" id="PR:Q6XQH0"/>
<dbReference type="Proteomes" id="UP000000589">
    <property type="component" value="Chromosome 1"/>
</dbReference>
<dbReference type="RNAct" id="Q6XQH0">
    <property type="molecule type" value="protein"/>
</dbReference>
<dbReference type="Bgee" id="ENSMUSG00000093805">
    <property type="expression patterns" value="Expressed in colon and 19 other cell types or tissues"/>
</dbReference>
<dbReference type="ExpressionAtlas" id="Q6XQH0">
    <property type="expression patterns" value="baseline and differential"/>
</dbReference>
<dbReference type="GO" id="GO:0032580">
    <property type="term" value="C:Golgi cisterna membrane"/>
    <property type="evidence" value="ECO:0007669"/>
    <property type="project" value="UniProtKB-SubCell"/>
</dbReference>
<dbReference type="GO" id="GO:0016020">
    <property type="term" value="C:membrane"/>
    <property type="evidence" value="ECO:0000314"/>
    <property type="project" value="MGI"/>
</dbReference>
<dbReference type="GO" id="GO:0050694">
    <property type="term" value="F:galactose 3-O-sulfotransferase activity"/>
    <property type="evidence" value="ECO:0000314"/>
    <property type="project" value="MGI"/>
</dbReference>
<dbReference type="GO" id="GO:0001733">
    <property type="term" value="F:galactosylceramide sulfotransferase activity"/>
    <property type="evidence" value="ECO:0007669"/>
    <property type="project" value="InterPro"/>
</dbReference>
<dbReference type="GO" id="GO:0009247">
    <property type="term" value="P:glycolipid biosynthetic process"/>
    <property type="evidence" value="ECO:0007669"/>
    <property type="project" value="InterPro"/>
</dbReference>
<dbReference type="GO" id="GO:0009101">
    <property type="term" value="P:glycoprotein biosynthetic process"/>
    <property type="evidence" value="ECO:0000314"/>
    <property type="project" value="MGI"/>
</dbReference>
<dbReference type="GO" id="GO:0051923">
    <property type="term" value="P:sulfation"/>
    <property type="evidence" value="ECO:0000314"/>
    <property type="project" value="MGI"/>
</dbReference>
<dbReference type="FunFam" id="3.40.50.300:FF:000807">
    <property type="entry name" value="galactosylceramide sulfotransferase isoform X1"/>
    <property type="match status" value="1"/>
</dbReference>
<dbReference type="Gene3D" id="3.40.50.300">
    <property type="entry name" value="P-loop containing nucleotide triphosphate hydrolases"/>
    <property type="match status" value="1"/>
</dbReference>
<dbReference type="InterPro" id="IPR009729">
    <property type="entry name" value="Gal-3-0_sulfotransfrase"/>
</dbReference>
<dbReference type="InterPro" id="IPR027417">
    <property type="entry name" value="P-loop_NTPase"/>
</dbReference>
<dbReference type="PANTHER" id="PTHR14647">
    <property type="entry name" value="GALACTOSE-3-O-SULFOTRANSFERASE"/>
    <property type="match status" value="1"/>
</dbReference>
<dbReference type="PANTHER" id="PTHR14647:SF55">
    <property type="entry name" value="GALACTOSE-3-O-SULFOTRANSFERASE 2"/>
    <property type="match status" value="1"/>
</dbReference>
<dbReference type="Pfam" id="PF06990">
    <property type="entry name" value="Gal-3-0_sulfotr"/>
    <property type="match status" value="1"/>
</dbReference>
<dbReference type="SUPFAM" id="SSF52540">
    <property type="entry name" value="P-loop containing nucleoside triphosphate hydrolases"/>
    <property type="match status" value="1"/>
</dbReference>
<comment type="function">
    <text evidence="1">Transfers a sulfate group to the hydroxyl group at C3 of non-reducing beta-galactosyl residues. Acts both on type 1 (Gal-beta-1,3-GlcNAc) and type 2 (Gal-beta-1,4-GlcNAc) chains with similar efficiency (By similarity).</text>
</comment>
<comment type="activity regulation">
    <text evidence="1">Strongly inhibited by Cu(2+) and Zn(2+).</text>
</comment>
<comment type="pathway">
    <text>Protein modification; carbohydrate sulfation.</text>
</comment>
<comment type="subcellular location">
    <subcellularLocation>
        <location evidence="3">Golgi apparatus</location>
        <location evidence="3">Golgi stack membrane</location>
        <topology evidence="3">Single-pass type II membrane protein</topology>
    </subcellularLocation>
</comment>
<comment type="similarity">
    <text evidence="3">Belongs to the galactose-3-O-sulfotransferase family.</text>
</comment>
<proteinExistence type="evidence at transcript level"/>
<gene>
    <name type="primary">Gal3st2</name>
    <name type="synonym">Gm988</name>
</gene>
<feature type="chain" id="PRO_0000085204" description="Galactose-3-O-sulfotransferase 2">
    <location>
        <begin position="1"/>
        <end position="394"/>
    </location>
</feature>
<feature type="topological domain" description="Cytoplasmic" evidence="2">
    <location>
        <begin position="1"/>
        <end position="8"/>
    </location>
</feature>
<feature type="transmembrane region" description="Helical; Signal-anchor for type II membrane protein" evidence="2">
    <location>
        <begin position="9"/>
        <end position="29"/>
    </location>
</feature>
<feature type="topological domain" description="Lumenal" evidence="2">
    <location>
        <begin position="30"/>
        <end position="394"/>
    </location>
</feature>
<feature type="glycosylation site" description="N-linked (GlcNAc...) asparagine" evidence="2">
    <location>
        <position position="72"/>
    </location>
</feature>
<feature type="glycosylation site" description="N-linked (GlcNAc...) asparagine" evidence="2">
    <location>
        <position position="176"/>
    </location>
</feature>
<feature type="glycosylation site" description="N-linked (GlcNAc...) asparagine" evidence="2">
    <location>
        <position position="284"/>
    </location>
</feature>
<feature type="glycosylation site" description="N-linked (GlcNAc...) asparagine" evidence="2">
    <location>
        <position position="326"/>
    </location>
</feature>